<keyword id="KW-0687">Ribonucleoprotein</keyword>
<keyword id="KW-0689">Ribosomal protein</keyword>
<keyword id="KW-0694">RNA-binding</keyword>
<keyword id="KW-0699">rRNA-binding</keyword>
<dbReference type="EMBL" id="CP000395">
    <property type="protein sequence ID" value="ABH01753.1"/>
    <property type="molecule type" value="Genomic_DNA"/>
</dbReference>
<dbReference type="EMBL" id="CP002933">
    <property type="protein sequence ID" value="AEL69707.1"/>
    <property type="molecule type" value="Genomic_DNA"/>
</dbReference>
<dbReference type="RefSeq" id="WP_002557073.1">
    <property type="nucleotide sequence ID" value="NZ_CP160066.1"/>
</dbReference>
<dbReference type="SMR" id="Q0SN25"/>
<dbReference type="STRING" id="29518.BLA32_01850"/>
<dbReference type="GeneID" id="83865957"/>
<dbReference type="KEGG" id="baf:BAPKO_0510"/>
<dbReference type="KEGG" id="bafz:BafPKo_0499"/>
<dbReference type="PATRIC" id="fig|390236.22.peg.479"/>
<dbReference type="eggNOG" id="COG0185">
    <property type="taxonomic scope" value="Bacteria"/>
</dbReference>
<dbReference type="HOGENOM" id="CLU_144911_0_1_12"/>
<dbReference type="OrthoDB" id="9797833at2"/>
<dbReference type="Proteomes" id="UP000005216">
    <property type="component" value="Chromosome"/>
</dbReference>
<dbReference type="GO" id="GO:0005737">
    <property type="term" value="C:cytoplasm"/>
    <property type="evidence" value="ECO:0007669"/>
    <property type="project" value="UniProtKB-ARBA"/>
</dbReference>
<dbReference type="GO" id="GO:0015935">
    <property type="term" value="C:small ribosomal subunit"/>
    <property type="evidence" value="ECO:0007669"/>
    <property type="project" value="InterPro"/>
</dbReference>
<dbReference type="GO" id="GO:0019843">
    <property type="term" value="F:rRNA binding"/>
    <property type="evidence" value="ECO:0007669"/>
    <property type="project" value="UniProtKB-UniRule"/>
</dbReference>
<dbReference type="GO" id="GO:0003735">
    <property type="term" value="F:structural constituent of ribosome"/>
    <property type="evidence" value="ECO:0007669"/>
    <property type="project" value="InterPro"/>
</dbReference>
<dbReference type="GO" id="GO:0000028">
    <property type="term" value="P:ribosomal small subunit assembly"/>
    <property type="evidence" value="ECO:0007669"/>
    <property type="project" value="TreeGrafter"/>
</dbReference>
<dbReference type="GO" id="GO:0006412">
    <property type="term" value="P:translation"/>
    <property type="evidence" value="ECO:0007669"/>
    <property type="project" value="UniProtKB-UniRule"/>
</dbReference>
<dbReference type="FunFam" id="3.30.860.10:FF:000001">
    <property type="entry name" value="30S ribosomal protein S19"/>
    <property type="match status" value="1"/>
</dbReference>
<dbReference type="Gene3D" id="3.30.860.10">
    <property type="entry name" value="30s Ribosomal Protein S19, Chain A"/>
    <property type="match status" value="1"/>
</dbReference>
<dbReference type="HAMAP" id="MF_00531">
    <property type="entry name" value="Ribosomal_uS19"/>
    <property type="match status" value="1"/>
</dbReference>
<dbReference type="InterPro" id="IPR002222">
    <property type="entry name" value="Ribosomal_uS19"/>
</dbReference>
<dbReference type="InterPro" id="IPR005732">
    <property type="entry name" value="Ribosomal_uS19_bac-type"/>
</dbReference>
<dbReference type="InterPro" id="IPR020934">
    <property type="entry name" value="Ribosomal_uS19_CS"/>
</dbReference>
<dbReference type="InterPro" id="IPR023575">
    <property type="entry name" value="Ribosomal_uS19_SF"/>
</dbReference>
<dbReference type="NCBIfam" id="TIGR01050">
    <property type="entry name" value="rpsS_bact"/>
    <property type="match status" value="1"/>
</dbReference>
<dbReference type="PANTHER" id="PTHR11880">
    <property type="entry name" value="RIBOSOMAL PROTEIN S19P FAMILY MEMBER"/>
    <property type="match status" value="1"/>
</dbReference>
<dbReference type="PANTHER" id="PTHR11880:SF8">
    <property type="entry name" value="SMALL RIBOSOMAL SUBUNIT PROTEIN US19M"/>
    <property type="match status" value="1"/>
</dbReference>
<dbReference type="Pfam" id="PF00203">
    <property type="entry name" value="Ribosomal_S19"/>
    <property type="match status" value="1"/>
</dbReference>
<dbReference type="PIRSF" id="PIRSF002144">
    <property type="entry name" value="Ribosomal_S19"/>
    <property type="match status" value="1"/>
</dbReference>
<dbReference type="PRINTS" id="PR00975">
    <property type="entry name" value="RIBOSOMALS19"/>
</dbReference>
<dbReference type="SUPFAM" id="SSF54570">
    <property type="entry name" value="Ribosomal protein S19"/>
    <property type="match status" value="1"/>
</dbReference>
<dbReference type="PROSITE" id="PS00323">
    <property type="entry name" value="RIBOSOMAL_S19"/>
    <property type="match status" value="1"/>
</dbReference>
<name>RS19_BORAP</name>
<comment type="function">
    <text evidence="1">Protein S19 forms a complex with S13 that binds strongly to the 16S ribosomal RNA.</text>
</comment>
<comment type="similarity">
    <text evidence="1">Belongs to the universal ribosomal protein uS19 family.</text>
</comment>
<organism>
    <name type="scientific">Borreliella afzelii (strain PKo)</name>
    <name type="common">Borrelia afzelii</name>
    <dbReference type="NCBI Taxonomy" id="390236"/>
    <lineage>
        <taxon>Bacteria</taxon>
        <taxon>Pseudomonadati</taxon>
        <taxon>Spirochaetota</taxon>
        <taxon>Spirochaetia</taxon>
        <taxon>Spirochaetales</taxon>
        <taxon>Borreliaceae</taxon>
        <taxon>Borreliella</taxon>
    </lineage>
</organism>
<protein>
    <recommendedName>
        <fullName evidence="1">Small ribosomal subunit protein uS19</fullName>
    </recommendedName>
    <alternativeName>
        <fullName evidence="2">30S ribosomal protein S19</fullName>
    </alternativeName>
</protein>
<gene>
    <name evidence="1" type="primary">rpsS</name>
    <name type="ordered locus">BAPKO_0510</name>
    <name type="ordered locus">BafPKo_0499</name>
</gene>
<proteinExistence type="inferred from homology"/>
<accession>Q0SN25</accession>
<accession>G0ISC6</accession>
<reference key="1">
    <citation type="journal article" date="2006" name="BMC Genomics">
        <title>Comparative genome analysis: selection pressure on the Borrelia vls cassettes is essential for infectivity.</title>
        <authorList>
            <person name="Gloeckner G."/>
            <person name="Schulte-Spechtel U."/>
            <person name="Schilhabel M."/>
            <person name="Felder M."/>
            <person name="Suehnel J."/>
            <person name="Wilske B."/>
            <person name="Platzer M."/>
        </authorList>
    </citation>
    <scope>NUCLEOTIDE SEQUENCE [LARGE SCALE GENOMIC DNA]</scope>
    <source>
        <strain>PKo</strain>
    </source>
</reference>
<reference key="2">
    <citation type="journal article" date="2011" name="J. Bacteriol.">
        <title>Whole-genome sequences of two Borrelia afzelii and two Borrelia garinii Lyme disease agent isolates.</title>
        <authorList>
            <person name="Casjens S.R."/>
            <person name="Mongodin E.F."/>
            <person name="Qiu W.G."/>
            <person name="Dunn J.J."/>
            <person name="Luft B.J."/>
            <person name="Fraser-Liggett C.M."/>
            <person name="Schutzer S.E."/>
        </authorList>
    </citation>
    <scope>NUCLEOTIDE SEQUENCE [LARGE SCALE GENOMIC DNA]</scope>
    <source>
        <strain>PKo</strain>
    </source>
</reference>
<feature type="chain" id="PRO_0000265332" description="Small ribosomal subunit protein uS19">
    <location>
        <begin position="1"/>
        <end position="92"/>
    </location>
</feature>
<sequence length="92" mass="10410">MARSIKKGPFIEKSLYQKVLSSFGSEKRVVIKTYSRSSTIIPEMVSLTISVYNGKTFIPIYITEDLVGHKLGEFSPTRIFRGHAKSDKKGRK</sequence>
<evidence type="ECO:0000255" key="1">
    <source>
        <dbReference type="HAMAP-Rule" id="MF_00531"/>
    </source>
</evidence>
<evidence type="ECO:0000305" key="2"/>